<organism>
    <name type="scientific">Xenopus laevis</name>
    <name type="common">African clawed frog</name>
    <dbReference type="NCBI Taxonomy" id="8355"/>
    <lineage>
        <taxon>Eukaryota</taxon>
        <taxon>Metazoa</taxon>
        <taxon>Chordata</taxon>
        <taxon>Craniata</taxon>
        <taxon>Vertebrata</taxon>
        <taxon>Euteleostomi</taxon>
        <taxon>Amphibia</taxon>
        <taxon>Batrachia</taxon>
        <taxon>Anura</taxon>
        <taxon>Pipoidea</taxon>
        <taxon>Pipidae</taxon>
        <taxon>Xenopodinae</taxon>
        <taxon>Xenopus</taxon>
        <taxon>Xenopus</taxon>
    </lineage>
</organism>
<comment type="function">
    <text evidence="1">May play a role in transcription or DNA repair.</text>
</comment>
<comment type="subcellular location">
    <subcellularLocation>
        <location evidence="1">Nucleus</location>
    </subcellularLocation>
</comment>
<comment type="similarity">
    <text evidence="3">Belongs to the enhancer of polycomb family.</text>
</comment>
<accession>Q66JA8</accession>
<dbReference type="EMBL" id="BC080994">
    <property type="protein sequence ID" value="AAH80994.1"/>
    <property type="molecule type" value="mRNA"/>
</dbReference>
<dbReference type="RefSeq" id="NP_001087609.1">
    <property type="nucleotide sequence ID" value="NM_001094140.1"/>
</dbReference>
<dbReference type="SMR" id="Q66JA8"/>
<dbReference type="BioGRID" id="104293">
    <property type="interactions" value="2"/>
</dbReference>
<dbReference type="DNASU" id="447433"/>
<dbReference type="GeneID" id="447433"/>
<dbReference type="KEGG" id="xla:447433"/>
<dbReference type="AGR" id="Xenbase:XB-GENE-866062"/>
<dbReference type="CTD" id="447433"/>
<dbReference type="Xenbase" id="XB-GENE-866062">
    <property type="gene designation" value="epc2.S"/>
</dbReference>
<dbReference type="OrthoDB" id="435275at2759"/>
<dbReference type="Proteomes" id="UP000186698">
    <property type="component" value="Chromosome 9_10S"/>
</dbReference>
<dbReference type="Bgee" id="447433">
    <property type="expression patterns" value="Expressed in testis and 19 other cell types or tissues"/>
</dbReference>
<dbReference type="GO" id="GO:0035267">
    <property type="term" value="C:NuA4 histone acetyltransferase complex"/>
    <property type="evidence" value="ECO:0007669"/>
    <property type="project" value="InterPro"/>
</dbReference>
<dbReference type="GO" id="GO:0005634">
    <property type="term" value="C:nucleus"/>
    <property type="evidence" value="ECO:0007669"/>
    <property type="project" value="UniProtKB-SubCell"/>
</dbReference>
<dbReference type="GO" id="GO:0032777">
    <property type="term" value="C:piccolo histone acetyltransferase complex"/>
    <property type="evidence" value="ECO:0000318"/>
    <property type="project" value="GO_Central"/>
</dbReference>
<dbReference type="GO" id="GO:0006325">
    <property type="term" value="P:chromatin organization"/>
    <property type="evidence" value="ECO:0007669"/>
    <property type="project" value="UniProtKB-KW"/>
</dbReference>
<dbReference type="GO" id="GO:0006281">
    <property type="term" value="P:DNA repair"/>
    <property type="evidence" value="ECO:0007669"/>
    <property type="project" value="UniProtKB-KW"/>
</dbReference>
<dbReference type="GO" id="GO:0006357">
    <property type="term" value="P:regulation of transcription by RNA polymerase II"/>
    <property type="evidence" value="ECO:0000318"/>
    <property type="project" value="GO_Central"/>
</dbReference>
<dbReference type="InterPro" id="IPR024943">
    <property type="entry name" value="Enhancer_polycomb"/>
</dbReference>
<dbReference type="InterPro" id="IPR019542">
    <property type="entry name" value="Enhancer_polycomb-like_N"/>
</dbReference>
<dbReference type="InterPro" id="IPR009607">
    <property type="entry name" value="Enhancer_polycomb_C"/>
</dbReference>
<dbReference type="PANTHER" id="PTHR14898">
    <property type="entry name" value="ENHANCER OF POLYCOMB"/>
    <property type="match status" value="1"/>
</dbReference>
<dbReference type="Pfam" id="PF06752">
    <property type="entry name" value="E_Pc_C"/>
    <property type="match status" value="1"/>
</dbReference>
<dbReference type="Pfam" id="PF10513">
    <property type="entry name" value="EPL1"/>
    <property type="match status" value="1"/>
</dbReference>
<evidence type="ECO:0000250" key="1"/>
<evidence type="ECO:0000256" key="2">
    <source>
        <dbReference type="SAM" id="MobiDB-lite"/>
    </source>
</evidence>
<evidence type="ECO:0000305" key="3"/>
<keyword id="KW-0156">Chromatin regulator</keyword>
<keyword id="KW-0227">DNA damage</keyword>
<keyword id="KW-0234">DNA repair</keyword>
<keyword id="KW-0539">Nucleus</keyword>
<keyword id="KW-1185">Reference proteome</keyword>
<keyword id="KW-0804">Transcription</keyword>
<keyword id="KW-0805">Transcription regulation</keyword>
<name>EPC2_XENLA</name>
<reference key="1">
    <citation type="submission" date="2004-08" db="EMBL/GenBank/DDBJ databases">
        <authorList>
            <consortium name="NIH - Xenopus Gene Collection (XGC) project"/>
        </authorList>
    </citation>
    <scope>NUCLEOTIDE SEQUENCE [LARGE SCALE MRNA]</scope>
    <source>
        <tissue>Ovary</tissue>
    </source>
</reference>
<feature type="chain" id="PRO_0000239297" description="Enhancer of polycomb homolog 2">
    <location>
        <begin position="1"/>
        <end position="804"/>
    </location>
</feature>
<feature type="region of interest" description="Disordered" evidence="2">
    <location>
        <begin position="372"/>
        <end position="395"/>
    </location>
</feature>
<feature type="region of interest" description="Disordered" evidence="2">
    <location>
        <begin position="484"/>
        <end position="508"/>
    </location>
</feature>
<feature type="region of interest" description="Disordered" evidence="2">
    <location>
        <begin position="603"/>
        <end position="624"/>
    </location>
</feature>
<feature type="region of interest" description="Disordered" evidence="2">
    <location>
        <begin position="646"/>
        <end position="669"/>
    </location>
</feature>
<feature type="compositionally biased region" description="Polar residues" evidence="2">
    <location>
        <begin position="611"/>
        <end position="624"/>
    </location>
</feature>
<feature type="compositionally biased region" description="Polar residues" evidence="2">
    <location>
        <begin position="654"/>
        <end position="669"/>
    </location>
</feature>
<protein>
    <recommendedName>
        <fullName>Enhancer of polycomb homolog 2</fullName>
    </recommendedName>
</protein>
<proteinExistence type="evidence at transcript level"/>
<sequence length="804" mass="90649">MSKLSFRARALDATKPLPIFRGNDMPDLNDCVSINRAVPQMPTGMEKEEESEHHLQRAISAQQVFREKKECMVIPVPEAESNVHYYSRLYKGEFKQPKQFIHITPFNLDYEQPDYDMDSEDETLLNRLNRKMEIKPLQFEIMIDRLEKASSNQLVSLQEAKLLLNEDDYLIKSVYDYWVRKRKNCRGPCLIPQVKQEKRDGSTNNDPYVAFRRRTEKMQTRKNRKNDEASYEKMLKLRREFSRAITILEMIKRREKTKRELLHLTLEVVEKRYNLGDFGGEILNEIKIPKADKEIYAIPPSLHNGNHHKVPECKVKNTHHLNVKDEVLEIVRLKKKYPKKPKADILVTPLPQANSEPLAVINRSDIKQYDFQSSDDDEFPQVPSPLSELEEENDPDGSYAFRRRAGCQYYAPHLDQMNDTPETTDLSGLARHRNRHCLTTLTVPRRCIGFARKRLGRGGRVIMDRLSTEHDSVLKQIDPEMLSGFSSSSHIAQPPSSPSRTNASDRHCENRLSLPEILSNIKSCRLQCFQPRLLHTQDSDREECTSRLGQAVNLKRVSSSLLNTSKNGITVTGGITEEQFQTHQQQLVQMQKQQLAQLQQKQQSQQSLQQSHPKAQGSGSSDCMSKTLDSASALFAASAVVNSPAPVRSEVNKDQNAGHSNLNGVVQPSGTAKTLYSTNMALSSSPGISTVQLVRTVGHPTTNHLIPTLCTSNPQTLTMGNSCLANTVHLNNVSVVSPVNVHLNTRTSAPSPTALKLATVAASMDRVPKVTPSSAMSSIARENHEPERLGLNGITDTTVAMEVT</sequence>
<gene>
    <name type="primary">epc2</name>
</gene>